<evidence type="ECO:0000250" key="1">
    <source>
        <dbReference type="UniProtKB" id="Q21A54"/>
    </source>
</evidence>
<evidence type="ECO:0000250" key="2">
    <source>
        <dbReference type="UniProtKB" id="Q9XDN5"/>
    </source>
</evidence>
<evidence type="ECO:0000305" key="3"/>
<feature type="chain" id="PRO_0000407717" description="Phosphate propanoyltransferase">
    <location>
        <begin position="1"/>
        <end position="215"/>
    </location>
</feature>
<feature type="binding site" evidence="1">
    <location>
        <begin position="33"/>
        <end position="35"/>
    </location>
    <ligand>
        <name>CoA</name>
        <dbReference type="ChEBI" id="CHEBI:57287"/>
    </ligand>
</feature>
<feature type="binding site" evidence="1">
    <location>
        <position position="37"/>
    </location>
    <ligand>
        <name>Zn(2+)</name>
        <dbReference type="ChEBI" id="CHEBI:29105"/>
        <label>1</label>
    </ligand>
</feature>
<feature type="binding site" evidence="1">
    <location>
        <position position="39"/>
    </location>
    <ligand>
        <name>Zn(2+)</name>
        <dbReference type="ChEBI" id="CHEBI:29105"/>
        <label>1</label>
    </ligand>
</feature>
<feature type="binding site" evidence="1">
    <location>
        <position position="61"/>
    </location>
    <ligand>
        <name>CoA</name>
        <dbReference type="ChEBI" id="CHEBI:57287"/>
    </ligand>
</feature>
<feature type="binding site" evidence="1">
    <location>
        <position position="79"/>
    </location>
    <ligand>
        <name>CoA</name>
        <dbReference type="ChEBI" id="CHEBI:57287"/>
    </ligand>
</feature>
<feature type="binding site" evidence="1">
    <location>
        <position position="86"/>
    </location>
    <ligand>
        <name>CoA</name>
        <dbReference type="ChEBI" id="CHEBI:57287"/>
    </ligand>
</feature>
<feature type="binding site" evidence="1">
    <location>
        <position position="92"/>
    </location>
    <ligand>
        <name>phosphate</name>
        <dbReference type="ChEBI" id="CHEBI:43474"/>
    </ligand>
</feature>
<feature type="binding site" evidence="1">
    <location>
        <position position="98"/>
    </location>
    <ligand>
        <name>Zn(2+)</name>
        <dbReference type="ChEBI" id="CHEBI:29105"/>
        <label>1</label>
    </ligand>
</feature>
<feature type="binding site" evidence="1">
    <location>
        <position position="105"/>
    </location>
    <ligand>
        <name>CoA</name>
        <dbReference type="ChEBI" id="CHEBI:57287"/>
    </ligand>
</feature>
<feature type="binding site" evidence="1">
    <location>
        <position position="146"/>
    </location>
    <ligand>
        <name>Zn(2+)</name>
        <dbReference type="ChEBI" id="CHEBI:29105"/>
        <label>2</label>
    </ligand>
</feature>
<feature type="binding site" evidence="1">
    <location>
        <position position="148"/>
    </location>
    <ligand>
        <name>Zn(2+)</name>
        <dbReference type="ChEBI" id="CHEBI:29105"/>
        <label>2</label>
    </ligand>
</feature>
<feature type="binding site" evidence="1">
    <location>
        <position position="193"/>
    </location>
    <ligand>
        <name>Zn(2+)</name>
        <dbReference type="ChEBI" id="CHEBI:29105"/>
        <label>2</label>
    </ligand>
</feature>
<feature type="binding site" evidence="1">
    <location>
        <position position="200"/>
    </location>
    <ligand>
        <name>CoA</name>
        <dbReference type="ChEBI" id="CHEBI:57287"/>
    </ligand>
</feature>
<gene>
    <name type="primary">pduL</name>
    <name type="ordered locus">RCAP_rcc02206</name>
</gene>
<dbReference type="EC" id="2.3.1.222"/>
<dbReference type="EMBL" id="CP001312">
    <property type="protein sequence ID" value="ADE85936.1"/>
    <property type="molecule type" value="Genomic_DNA"/>
</dbReference>
<dbReference type="RefSeq" id="WP_013067915.1">
    <property type="nucleotide sequence ID" value="NC_014034.1"/>
</dbReference>
<dbReference type="SMR" id="D5AKU6"/>
<dbReference type="STRING" id="272942.RCAP_rcc02206"/>
<dbReference type="GeneID" id="31491051"/>
<dbReference type="KEGG" id="rcp:RCAP_rcc02206"/>
<dbReference type="eggNOG" id="COG4869">
    <property type="taxonomic scope" value="Bacteria"/>
</dbReference>
<dbReference type="HOGENOM" id="CLU_080676_1_0_5"/>
<dbReference type="OrthoDB" id="9784365at2"/>
<dbReference type="UniPathway" id="UPA00621"/>
<dbReference type="Proteomes" id="UP000002361">
    <property type="component" value="Chromosome"/>
</dbReference>
<dbReference type="GO" id="GO:0031469">
    <property type="term" value="C:bacterial microcompartment"/>
    <property type="evidence" value="ECO:0007669"/>
    <property type="project" value="UniProtKB-SubCell"/>
</dbReference>
<dbReference type="GO" id="GO:0016747">
    <property type="term" value="F:acyltransferase activity, transferring groups other than amino-acyl groups"/>
    <property type="evidence" value="ECO:0007669"/>
    <property type="project" value="InterPro"/>
</dbReference>
<dbReference type="GO" id="GO:0046872">
    <property type="term" value="F:metal ion binding"/>
    <property type="evidence" value="ECO:0007669"/>
    <property type="project" value="UniProtKB-KW"/>
</dbReference>
<dbReference type="GO" id="GO:0051144">
    <property type="term" value="P:propanediol catabolic process"/>
    <property type="evidence" value="ECO:0007669"/>
    <property type="project" value="UniProtKB-UniPathway"/>
</dbReference>
<dbReference type="InterPro" id="IPR008300">
    <property type="entry name" value="PTAC"/>
</dbReference>
<dbReference type="NCBIfam" id="NF011652">
    <property type="entry name" value="PRK15070.1"/>
    <property type="match status" value="1"/>
</dbReference>
<dbReference type="PANTHER" id="PTHR39453">
    <property type="entry name" value="PHOSPHATE PROPANOYLTRANSFERASE"/>
    <property type="match status" value="1"/>
</dbReference>
<dbReference type="PANTHER" id="PTHR39453:SF1">
    <property type="entry name" value="PHOSPHATE PROPANOYLTRANSFERASE"/>
    <property type="match status" value="1"/>
</dbReference>
<dbReference type="Pfam" id="PF06130">
    <property type="entry name" value="PTAC"/>
    <property type="match status" value="1"/>
</dbReference>
<dbReference type="PIRSF" id="PIRSF010130">
    <property type="entry name" value="PduL"/>
    <property type="match status" value="1"/>
</dbReference>
<reference key="1">
    <citation type="journal article" date="2010" name="J. Bacteriol.">
        <title>Complete genome sequence of the photosynthetic purple nonsulfur bacterium Rhodobacter capsulatus SB 1003.</title>
        <authorList>
            <person name="Strnad H."/>
            <person name="Lapidus A."/>
            <person name="Paces J."/>
            <person name="Ulbrich P."/>
            <person name="Vlcek C."/>
            <person name="Paces V."/>
            <person name="Haselkorn R."/>
        </authorList>
    </citation>
    <scope>NUCLEOTIDE SEQUENCE [LARGE SCALE GENOMIC DNA]</scope>
    <source>
        <strain>ATCC BAA-309 / NBRC 16581 / SB1003</strain>
    </source>
</reference>
<proteinExistence type="inferred from homology"/>
<sequence length="215" mass="22768">MFPQSLIDRILAELLAQDVAATDTDPALVPVGVSNRHVHLSRPDMDALFGPGASLTRMKAMKQPGQYAAAETVTLRGPKGDIGKVRVLGPLRKETQIEISVADGFTLGIKPPMRMSGKLDGSAGLTVIGPAGSVTKEAGVIVALRHIHMRPEDAVRLGVKTGDSVDVVVSGPRGGVMHNVTIRSDEVSATEMHIDVEEANAFGLQNDALVRVRKV</sequence>
<name>PDUL_RHOCB</name>
<protein>
    <recommendedName>
        <fullName>Phosphate propanoyltransferase</fullName>
        <ecNumber>2.3.1.222</ecNumber>
    </recommendedName>
    <alternativeName>
        <fullName>Phosphate acyltransferase PduL</fullName>
    </alternativeName>
    <alternativeName>
        <fullName>Phosphotransacylase PduL</fullName>
        <shortName>PTAC</shortName>
    </alternativeName>
    <alternativeName>
        <fullName>Propanediol utilization protein PduL</fullName>
    </alternativeName>
</protein>
<organism>
    <name type="scientific">Rhodobacter capsulatus (strain ATCC BAA-309 / NBRC 16581 / SB1003)</name>
    <dbReference type="NCBI Taxonomy" id="272942"/>
    <lineage>
        <taxon>Bacteria</taxon>
        <taxon>Pseudomonadati</taxon>
        <taxon>Pseudomonadota</taxon>
        <taxon>Alphaproteobacteria</taxon>
        <taxon>Rhodobacterales</taxon>
        <taxon>Rhodobacter group</taxon>
        <taxon>Rhodobacter</taxon>
    </lineage>
</organism>
<keyword id="KW-0012">Acyltransferase</keyword>
<keyword id="KW-1283">Bacterial microcompartment</keyword>
<keyword id="KW-0479">Metal-binding</keyword>
<keyword id="KW-1185">Reference proteome</keyword>
<keyword id="KW-0808">Transferase</keyword>
<keyword id="KW-0862">Zinc</keyword>
<accession>D5AKU6</accession>
<comment type="function">
    <text evidence="2">Involved in 1,2-propanediol (1,2-PD) utilization within the bacterial microcompartment (BMC) dedicated to 1,2-PD degradation by catalyzing the conversion of propanoyl-CoA to propanoyl-phosphate.</text>
</comment>
<comment type="catalytic activity">
    <reaction evidence="2">
        <text>propanoyl-CoA + phosphate = propanoyl phosphate + CoA</text>
        <dbReference type="Rhea" id="RHEA:28046"/>
        <dbReference type="ChEBI" id="CHEBI:43474"/>
        <dbReference type="ChEBI" id="CHEBI:57287"/>
        <dbReference type="ChEBI" id="CHEBI:57392"/>
        <dbReference type="ChEBI" id="CHEBI:58933"/>
        <dbReference type="EC" id="2.3.1.222"/>
    </reaction>
</comment>
<comment type="cofactor">
    <cofactor evidence="1">
        <name>Zn(2+)</name>
        <dbReference type="ChEBI" id="CHEBI:29105"/>
    </cofactor>
    <text evidence="1">There are 2 Zn(2+) ions per monomer; Zn(2+) and CoA bind inbetween the 2 domains in each monomer.</text>
</comment>
<comment type="pathway">
    <text>Polyol metabolism; 1,2-propanediol degradation.</text>
</comment>
<comment type="subcellular location">
    <subcellularLocation>
        <location evidence="2">Bacterial microcompartment</location>
    </subcellularLocation>
</comment>
<comment type="domain">
    <text evidence="1">Formed by 2 beta-barrels, each is capped on both ends by short alpha-helices.</text>
</comment>
<comment type="similarity">
    <text evidence="3">Belongs to the PduL family.</text>
</comment>